<feature type="chain" id="PRO_0000271393" description="Villin-1">
    <location>
        <begin position="1"/>
        <end position="827"/>
    </location>
</feature>
<feature type="repeat" description="Gelsolin-like 1">
    <location>
        <begin position="27"/>
        <end position="76"/>
    </location>
</feature>
<feature type="repeat" description="Gelsolin-like 2">
    <location>
        <begin position="148"/>
        <end position="188"/>
    </location>
</feature>
<feature type="repeat" description="Gelsolin-like 3">
    <location>
        <begin position="265"/>
        <end position="309"/>
    </location>
</feature>
<feature type="repeat" description="Gelsolin-like 4">
    <location>
        <begin position="407"/>
        <end position="457"/>
    </location>
</feature>
<feature type="repeat" description="Gelsolin-like 5">
    <location>
        <begin position="528"/>
        <end position="568"/>
    </location>
</feature>
<feature type="repeat" description="Gelsolin-like 6">
    <location>
        <begin position="631"/>
        <end position="672"/>
    </location>
</feature>
<feature type="domain" description="HP" evidence="4">
    <location>
        <begin position="761"/>
        <end position="827"/>
    </location>
</feature>
<feature type="region of interest" description="Core">
    <location>
        <begin position="1"/>
        <end position="734"/>
    </location>
</feature>
<feature type="region of interest" description="Necessary for homodimerization" evidence="1">
    <location>
        <begin position="1"/>
        <end position="126"/>
    </location>
</feature>
<feature type="region of interest" description="LPA/PIP2-binding site 1" evidence="1">
    <location>
        <begin position="112"/>
        <end position="119"/>
    </location>
</feature>
<feature type="region of interest" description="LPA/PIP2-binding site 2" evidence="1">
    <location>
        <begin position="138"/>
        <end position="146"/>
    </location>
</feature>
<feature type="region of interest" description="Headpiece">
    <location>
        <begin position="735"/>
        <end position="827"/>
    </location>
</feature>
<feature type="region of interest" description="LPA/PIP2-binding site 3" evidence="1">
    <location>
        <begin position="816"/>
        <end position="824"/>
    </location>
</feature>
<feature type="modified residue" description="Phosphoserine" evidence="2">
    <location>
        <position position="366"/>
    </location>
</feature>
<feature type="modified residue" description="Phosphoserine" evidence="3">
    <location>
        <position position="735"/>
    </location>
</feature>
<organism>
    <name type="scientific">Bos taurus</name>
    <name type="common">Bovine</name>
    <dbReference type="NCBI Taxonomy" id="9913"/>
    <lineage>
        <taxon>Eukaryota</taxon>
        <taxon>Metazoa</taxon>
        <taxon>Chordata</taxon>
        <taxon>Craniata</taxon>
        <taxon>Vertebrata</taxon>
        <taxon>Euteleostomi</taxon>
        <taxon>Mammalia</taxon>
        <taxon>Eutheria</taxon>
        <taxon>Laurasiatheria</taxon>
        <taxon>Artiodactyla</taxon>
        <taxon>Ruminantia</taxon>
        <taxon>Pecora</taxon>
        <taxon>Bovidae</taxon>
        <taxon>Bovinae</taxon>
        <taxon>Bos</taxon>
    </lineage>
</organism>
<keyword id="KW-0117">Actin capping</keyword>
<keyword id="KW-0009">Actin-binding</keyword>
<keyword id="KW-0053">Apoptosis</keyword>
<keyword id="KW-0106">Calcium</keyword>
<keyword id="KW-0966">Cell projection</keyword>
<keyword id="KW-0963">Cytoplasm</keyword>
<keyword id="KW-0206">Cytoskeleton</keyword>
<keyword id="KW-0597">Phosphoprotein</keyword>
<keyword id="KW-1185">Reference proteome</keyword>
<keyword id="KW-0677">Repeat</keyword>
<sequence length="827" mass="92802">MTKLSAQVKGSLNITTPGVQIWRIEAMQMVPVPSNSFGSFFDGDCYVIQAIHKTGSNLSYDIHYWIGQASSQDEQGAAAIYTTQMDDFLKGRAVQHREVQGNESDTFRGYFKKGIVIRKGGVASGMKQVETNSYDIQRLLHVKGKRNVVAGEVEMSWKSFNRGDVFLLDLGKLIIQWNGPESNHMERLRGMNLAKEIRDQERGGRTYVGVVDGEDEKASPQLMEIMNHVLGQRKELKAAVADTVVEPALKAALKLYHVSDSEGKVVVREIATQPLTQDLLSHEDCYILDQGGLKIYVWKGKNANAQEKKEAMNQALNFIKAKQYPPSTQVELQNDGAESAVFQQLFQKWTVPNRTTGLGKTHTVGSVAKVEQVKFDAMSMHVQPQVAAQQKMVDDGSGEVQMWRIENLELVPVNTKWLGHFFGGDCYLLLYTYFINEKPHYLLYIWQGSQASQDEITASAYQAVILDQEYNNEPVQIRVPMGKEPPHLMSIFKGCMVVYQGGTSRANSVEPVPSTRLFQVRGTSANNTKAFEVSPRAASLNSNDVFILKTQSCCYLWCGKGCSGDEREMAKMVADTVSRTEKQVVVEGQEPANFWLALGGKAPYASTKRLQEENLVITPRLFECSNQTGRFLATEIPDFNQDDLEEDDVFLLDVWDQVFFWIGKNANEDEKKAAATTVQEYLKTHPGGRDLETPIIVVKQGHEPPTFTGWFLAWDPFKWNNSKSYEDLKAELGNSGDWSQITAELTSSKPEAFNANSNLSSGPLPIFPLEQLVNKPTEELPEGVDPSRREEHLSIEDFTRALGMTPSAFWALPRWKQQNLKKEKGLF</sequence>
<comment type="function">
    <text evidence="1">Epithelial cell-specific Ca(2+)-regulated actin-modifying protein that modulates the reorganization of microvillar actin filaments. Plays a role in the actin nucleation, actin filament bundle assembly, actin filament capping and severing. Binds phosphatidylinositol 4,5-bisphosphate (PIP2) and lysophosphatidic acid (LPA); binds LPA with higher affinity than PIP2. Binding to LPA increases its phosphorylation by SRC and inhibits all actin-modifying activities. Binding to PIP2 inhibits actin-capping and -severing activities but enhances actin-bundling activity. Regulates the intestinal epithelial cell morphology, cell invasion, cell migration and apoptosis. Protects against apoptosis induced by dextran sodium sulfate (DSS) in the gastrointestinal epithelium. Appears to regulate cell death by maintaining mitochondrial integrity. Enhances hepatocyte growth factor (HGF)-induced epithelial cell motility, chemotaxis and wound repair (By similarity).</text>
</comment>
<comment type="subunit">
    <text evidence="1">Monomer. Homodimer; homodimerization is necessary for actin-bundling. Associates with F-actin; phosphorylation at tyrosine residues decreases the association with F-actin. Interacts (phosphorylated at C-terminus tyrosine phosphorylation sites) with PLCG1 (via the SH2 domains). Interacts (phosphorylated form) with PLCG1; the interaction is enhanced by hepatocyte growth factor (HGF) (By similarity).</text>
</comment>
<comment type="subcellular location">
    <subcellularLocation>
        <location evidence="1">Cytoplasm</location>
        <location evidence="1">Cytoskeleton</location>
    </subcellularLocation>
    <subcellularLocation>
        <location evidence="1">Cell projection</location>
        <location evidence="1">Lamellipodium</location>
    </subcellularLocation>
    <subcellularLocation>
        <location evidence="1">Cell projection</location>
        <location evidence="1">Ruffle</location>
    </subcellularLocation>
    <subcellularLocation>
        <location evidence="1">Cell projection</location>
        <location evidence="1">Microvillus</location>
    </subcellularLocation>
    <subcellularLocation>
        <location evidence="1">Cell projection</location>
        <location evidence="1">Filopodium tip</location>
    </subcellularLocation>
    <subcellularLocation>
        <location evidence="1">Cell projection</location>
        <location evidence="1">Filopodium</location>
    </subcellularLocation>
    <text evidence="1">Rapidly redistributed to ruffles and lamellipodia structures in response to autotaxin, lysophosphatidic acid (LPA) and epidermal growth factor (EGF) treatment. Redistributed to the leading edge of hepatocyte growth factor (HGF)-induced lamellipodia (By similarity).</text>
</comment>
<comment type="domain">
    <text evidence="1">Consists of a large core fragment in the N-terminal portion and a small headpiece (HP) in the C-terminal portion. The core fragment is necessary for both actin-nucleating and -severing activities, whereas the HP binds F-actin strongly in both the presence and absence of calcium and is necessary in actin-bundling activity. The Gelsolin-like 1 repeat is necessary for the actin-capping activity. The entire core fragment is necessary for the actin-severing activity. Two major calcium-sensitive sites are involved in conformational changes and determine separate functional properties: the first site (Glu-25, Asp-44 and Glu-74) regulates the actin-capping and actin-severing activities; while the second site (Asp-61, Asp-86 and Ala-93) regulates only the actin-severing activity (By similarity).</text>
</comment>
<comment type="PTM">
    <text evidence="1">Phosphorylated on tyrosine residues by SRC. The unphosphorylated form increases the initial rate of actin-nucleating activity, whereas the tyrosine-phosphorylated form inhibits actin-nucleating activity, enhances actin-bundling activity and enhances actin-severing activity by reducing high Ca(2+) requirements. The tyrosine-phosphorylated form does not regulate actin-capping activity. Tyrosine phosphorylation is essential for cell migration: tyrosine phosphorylation sites in the N-terminus half regulate actin reorganization and cell morphology, whereas tyrosine phosphorylation sites in the C-terminus half regulate cell migration via interaction with PLCG1. Tyrosine phosphorylation is induced by epidermal growth factor (EGF) and stimulates cell migration (By similarity).</text>
</comment>
<comment type="similarity">
    <text evidence="5">Belongs to the villin/gelsolin family.</text>
</comment>
<proteinExistence type="evidence at transcript level"/>
<reference key="1">
    <citation type="submission" date="2005-08" db="EMBL/GenBank/DDBJ databases">
        <authorList>
            <consortium name="NIH - Mammalian Gene Collection (MGC) project"/>
        </authorList>
    </citation>
    <scope>NUCLEOTIDE SEQUENCE [LARGE SCALE MRNA]</scope>
    <source>
        <strain>Crossbred X Angus</strain>
        <tissue>Ileum</tissue>
    </source>
</reference>
<dbReference type="EMBL" id="BC102759">
    <property type="protein sequence ID" value="AAI02760.1"/>
    <property type="molecule type" value="mRNA"/>
</dbReference>
<dbReference type="SMR" id="Q3SZP7"/>
<dbReference type="FunCoup" id="Q3SZP7">
    <property type="interactions" value="157"/>
</dbReference>
<dbReference type="STRING" id="9913.ENSBTAP00000024683"/>
<dbReference type="PaxDb" id="9913-ENSBTAP00000024683"/>
<dbReference type="PeptideAtlas" id="Q3SZP7"/>
<dbReference type="eggNOG" id="KOG0443">
    <property type="taxonomic scope" value="Eukaryota"/>
</dbReference>
<dbReference type="InParanoid" id="Q3SZP7"/>
<dbReference type="OrthoDB" id="6375767at2759"/>
<dbReference type="Proteomes" id="UP000009136">
    <property type="component" value="Unplaced"/>
</dbReference>
<dbReference type="GO" id="GO:0015629">
    <property type="term" value="C:actin cytoskeleton"/>
    <property type="evidence" value="ECO:0000318"/>
    <property type="project" value="GO_Central"/>
</dbReference>
<dbReference type="GO" id="GO:0032432">
    <property type="term" value="C:actin filament bundle"/>
    <property type="evidence" value="ECO:0000250"/>
    <property type="project" value="UniProtKB"/>
</dbReference>
<dbReference type="GO" id="GO:0005737">
    <property type="term" value="C:cytoplasm"/>
    <property type="evidence" value="ECO:0000318"/>
    <property type="project" value="GO_Central"/>
</dbReference>
<dbReference type="GO" id="GO:0030175">
    <property type="term" value="C:filopodium"/>
    <property type="evidence" value="ECO:0000250"/>
    <property type="project" value="UniProtKB"/>
</dbReference>
<dbReference type="GO" id="GO:0032433">
    <property type="term" value="C:filopodium tip"/>
    <property type="evidence" value="ECO:0000250"/>
    <property type="project" value="UniProtKB"/>
</dbReference>
<dbReference type="GO" id="GO:0030027">
    <property type="term" value="C:lamellipodium"/>
    <property type="evidence" value="ECO:0000250"/>
    <property type="project" value="UniProtKB"/>
</dbReference>
<dbReference type="GO" id="GO:0005902">
    <property type="term" value="C:microvillus"/>
    <property type="evidence" value="ECO:0000250"/>
    <property type="project" value="UniProtKB"/>
</dbReference>
<dbReference type="GO" id="GO:0001726">
    <property type="term" value="C:ruffle"/>
    <property type="evidence" value="ECO:0000250"/>
    <property type="project" value="UniProtKB"/>
</dbReference>
<dbReference type="GO" id="GO:0051015">
    <property type="term" value="F:actin filament binding"/>
    <property type="evidence" value="ECO:0000250"/>
    <property type="project" value="UniProtKB"/>
</dbReference>
<dbReference type="GO" id="GO:0005509">
    <property type="term" value="F:calcium ion binding"/>
    <property type="evidence" value="ECO:0000250"/>
    <property type="project" value="UniProtKB"/>
</dbReference>
<dbReference type="GO" id="GO:0043027">
    <property type="term" value="F:cysteine-type endopeptidase inhibitor activity involved in apoptotic process"/>
    <property type="evidence" value="ECO:0000250"/>
    <property type="project" value="UniProtKB"/>
</dbReference>
<dbReference type="GO" id="GO:0035727">
    <property type="term" value="F:lysophosphatidic acid binding"/>
    <property type="evidence" value="ECO:0000250"/>
    <property type="project" value="UniProtKB"/>
</dbReference>
<dbReference type="GO" id="GO:0005546">
    <property type="term" value="F:phosphatidylinositol-4,5-bisphosphate binding"/>
    <property type="evidence" value="ECO:0000250"/>
    <property type="project" value="UniProtKB"/>
</dbReference>
<dbReference type="GO" id="GO:0042803">
    <property type="term" value="F:protein homodimerization activity"/>
    <property type="evidence" value="ECO:0000250"/>
    <property type="project" value="UniProtKB"/>
</dbReference>
<dbReference type="GO" id="GO:0051693">
    <property type="term" value="P:actin filament capping"/>
    <property type="evidence" value="ECO:0000250"/>
    <property type="project" value="UniProtKB"/>
</dbReference>
<dbReference type="GO" id="GO:0030042">
    <property type="term" value="P:actin filament depolymerization"/>
    <property type="evidence" value="ECO:0000250"/>
    <property type="project" value="UniProtKB"/>
</dbReference>
<dbReference type="GO" id="GO:0030041">
    <property type="term" value="P:actin filament polymerization"/>
    <property type="evidence" value="ECO:0000250"/>
    <property type="project" value="UniProtKB"/>
</dbReference>
<dbReference type="GO" id="GO:0051014">
    <property type="term" value="P:actin filament severing"/>
    <property type="evidence" value="ECO:0000250"/>
    <property type="project" value="UniProtKB"/>
</dbReference>
<dbReference type="GO" id="GO:0008154">
    <property type="term" value="P:actin polymerization or depolymerization"/>
    <property type="evidence" value="ECO:0000318"/>
    <property type="project" value="GO_Central"/>
</dbReference>
<dbReference type="GO" id="GO:0006915">
    <property type="term" value="P:apoptotic process"/>
    <property type="evidence" value="ECO:0007669"/>
    <property type="project" value="UniProtKB-KW"/>
</dbReference>
<dbReference type="GO" id="GO:0051016">
    <property type="term" value="P:barbed-end actin filament capping"/>
    <property type="evidence" value="ECO:0000318"/>
    <property type="project" value="GO_Central"/>
</dbReference>
<dbReference type="GO" id="GO:0071364">
    <property type="term" value="P:cellular response to epidermal growth factor stimulus"/>
    <property type="evidence" value="ECO:0000250"/>
    <property type="project" value="UniProtKB"/>
</dbReference>
<dbReference type="GO" id="GO:0035729">
    <property type="term" value="P:cellular response to hepatocyte growth factor stimulus"/>
    <property type="evidence" value="ECO:0000250"/>
    <property type="project" value="UniProtKB"/>
</dbReference>
<dbReference type="GO" id="GO:0060327">
    <property type="term" value="P:cytoplasmic actin-based contraction involved in cell motility"/>
    <property type="evidence" value="ECO:0000250"/>
    <property type="project" value="UniProtKB"/>
</dbReference>
<dbReference type="GO" id="GO:0007173">
    <property type="term" value="P:epidermal growth factor receptor signaling pathway"/>
    <property type="evidence" value="ECO:0000250"/>
    <property type="project" value="UniProtKB"/>
</dbReference>
<dbReference type="GO" id="GO:0032233">
    <property type="term" value="P:positive regulation of actin filament bundle assembly"/>
    <property type="evidence" value="ECO:0000250"/>
    <property type="project" value="UniProtKB"/>
</dbReference>
<dbReference type="GO" id="GO:0030335">
    <property type="term" value="P:positive regulation of cell migration"/>
    <property type="evidence" value="ECO:0000250"/>
    <property type="project" value="UniProtKB"/>
</dbReference>
<dbReference type="GO" id="GO:0010634">
    <property type="term" value="P:positive regulation of epithelial cell migration"/>
    <property type="evidence" value="ECO:0000250"/>
    <property type="project" value="UniProtKB"/>
</dbReference>
<dbReference type="GO" id="GO:0051125">
    <property type="term" value="P:regulation of actin nucleation"/>
    <property type="evidence" value="ECO:0000250"/>
    <property type="project" value="UniProtKB"/>
</dbReference>
<dbReference type="GO" id="GO:0008360">
    <property type="term" value="P:regulation of cell shape"/>
    <property type="evidence" value="ECO:0000250"/>
    <property type="project" value="UniProtKB"/>
</dbReference>
<dbReference type="GO" id="GO:2000392">
    <property type="term" value="P:regulation of lamellipodium morphogenesis"/>
    <property type="evidence" value="ECO:0000250"/>
    <property type="project" value="UniProtKB"/>
</dbReference>
<dbReference type="GO" id="GO:0061041">
    <property type="term" value="P:regulation of wound healing"/>
    <property type="evidence" value="ECO:0000250"/>
    <property type="project" value="UniProtKB"/>
</dbReference>
<dbReference type="GO" id="GO:0009617">
    <property type="term" value="P:response to bacterium"/>
    <property type="evidence" value="ECO:0000250"/>
    <property type="project" value="UniProtKB"/>
</dbReference>
<dbReference type="CDD" id="cd11290">
    <property type="entry name" value="gelsolin_S1_like"/>
    <property type="match status" value="1"/>
</dbReference>
<dbReference type="CDD" id="cd11289">
    <property type="entry name" value="gelsolin_S2_like"/>
    <property type="match status" value="1"/>
</dbReference>
<dbReference type="CDD" id="cd11292">
    <property type="entry name" value="gelsolin_S3_like"/>
    <property type="match status" value="1"/>
</dbReference>
<dbReference type="CDD" id="cd11293">
    <property type="entry name" value="gelsolin_S4_like"/>
    <property type="match status" value="1"/>
</dbReference>
<dbReference type="CDD" id="cd11288">
    <property type="entry name" value="gelsolin_S5_like"/>
    <property type="match status" value="1"/>
</dbReference>
<dbReference type="CDD" id="cd11291">
    <property type="entry name" value="gelsolin_S6_like"/>
    <property type="match status" value="1"/>
</dbReference>
<dbReference type="FunFam" id="3.40.20.10:FF:000001">
    <property type="entry name" value="Gelsolin"/>
    <property type="match status" value="1"/>
</dbReference>
<dbReference type="FunFam" id="3.40.20.10:FF:000002">
    <property type="entry name" value="Gelsolin"/>
    <property type="match status" value="1"/>
</dbReference>
<dbReference type="FunFam" id="3.40.20.10:FF:000004">
    <property type="entry name" value="Gelsolin"/>
    <property type="match status" value="1"/>
</dbReference>
<dbReference type="FunFam" id="3.40.20.10:FF:000005">
    <property type="entry name" value="Gelsolin"/>
    <property type="match status" value="1"/>
</dbReference>
<dbReference type="FunFam" id="3.40.20.10:FF:000027">
    <property type="entry name" value="Villin 1"/>
    <property type="match status" value="1"/>
</dbReference>
<dbReference type="FunFam" id="1.10.950.10:FF:000005">
    <property type="entry name" value="Villin-1"/>
    <property type="match status" value="1"/>
</dbReference>
<dbReference type="FunFam" id="3.40.20.10:FF:000035">
    <property type="entry name" value="Villin-1"/>
    <property type="match status" value="1"/>
</dbReference>
<dbReference type="Gene3D" id="3.40.20.10">
    <property type="entry name" value="Severin"/>
    <property type="match status" value="6"/>
</dbReference>
<dbReference type="Gene3D" id="1.10.950.10">
    <property type="entry name" value="Villin headpiece domain"/>
    <property type="match status" value="1"/>
</dbReference>
<dbReference type="InterPro" id="IPR029006">
    <property type="entry name" value="ADF-H/Gelsolin-like_dom_sf"/>
</dbReference>
<dbReference type="InterPro" id="IPR007123">
    <property type="entry name" value="Gelsolin-like_dom"/>
</dbReference>
<dbReference type="InterPro" id="IPR036180">
    <property type="entry name" value="Gelsolin-like_dom_sf"/>
</dbReference>
<dbReference type="InterPro" id="IPR007122">
    <property type="entry name" value="Villin/Gelsolin"/>
</dbReference>
<dbReference type="InterPro" id="IPR003128">
    <property type="entry name" value="Villin_headpiece"/>
</dbReference>
<dbReference type="InterPro" id="IPR036886">
    <property type="entry name" value="Villin_headpiece_dom_sf"/>
</dbReference>
<dbReference type="PANTHER" id="PTHR11977">
    <property type="entry name" value="VILLIN"/>
    <property type="match status" value="1"/>
</dbReference>
<dbReference type="PANTHER" id="PTHR11977:SF35">
    <property type="entry name" value="VILLIN-1"/>
    <property type="match status" value="1"/>
</dbReference>
<dbReference type="Pfam" id="PF00626">
    <property type="entry name" value="Gelsolin"/>
    <property type="match status" value="6"/>
</dbReference>
<dbReference type="Pfam" id="PF02209">
    <property type="entry name" value="VHP"/>
    <property type="match status" value="1"/>
</dbReference>
<dbReference type="PRINTS" id="PR00597">
    <property type="entry name" value="GELSOLIN"/>
</dbReference>
<dbReference type="SMART" id="SM00262">
    <property type="entry name" value="GEL"/>
    <property type="match status" value="6"/>
</dbReference>
<dbReference type="SMART" id="SM00153">
    <property type="entry name" value="VHP"/>
    <property type="match status" value="1"/>
</dbReference>
<dbReference type="SUPFAM" id="SSF55753">
    <property type="entry name" value="Actin depolymerizing proteins"/>
    <property type="match status" value="4"/>
</dbReference>
<dbReference type="SUPFAM" id="SSF82754">
    <property type="entry name" value="C-terminal, gelsolin-like domain of Sec23/24"/>
    <property type="match status" value="2"/>
</dbReference>
<dbReference type="SUPFAM" id="SSF47050">
    <property type="entry name" value="VHP, Villin headpiece domain"/>
    <property type="match status" value="1"/>
</dbReference>
<dbReference type="PROSITE" id="PS51089">
    <property type="entry name" value="HP"/>
    <property type="match status" value="1"/>
</dbReference>
<protein>
    <recommendedName>
        <fullName>Villin-1</fullName>
    </recommendedName>
</protein>
<gene>
    <name type="primary">VIL1</name>
</gene>
<evidence type="ECO:0000250" key="1"/>
<evidence type="ECO:0000250" key="2">
    <source>
        <dbReference type="UniProtKB" id="P09327"/>
    </source>
</evidence>
<evidence type="ECO:0000250" key="3">
    <source>
        <dbReference type="UniProtKB" id="Q62468"/>
    </source>
</evidence>
<evidence type="ECO:0000255" key="4">
    <source>
        <dbReference type="PROSITE-ProRule" id="PRU00595"/>
    </source>
</evidence>
<evidence type="ECO:0000305" key="5"/>
<accession>Q3SZP7</accession>
<name>VILI_BOVIN</name>